<keyword id="KW-0963">Cytoplasm</keyword>
<keyword id="KW-0967">Endosome</keyword>
<keyword id="KW-0342">GTP-binding</keyword>
<keyword id="KW-0378">Hydrolase</keyword>
<keyword id="KW-0449">Lipoprotein</keyword>
<keyword id="KW-0472">Membrane</keyword>
<keyword id="KW-0488">Methylation</keyword>
<keyword id="KW-0547">Nucleotide-binding</keyword>
<keyword id="KW-0564">Palmitate</keyword>
<keyword id="KW-0636">Prenylation</keyword>
<keyword id="KW-1267">Proteomics identification</keyword>
<keyword id="KW-1185">Reference proteome</keyword>
<reference key="1">
    <citation type="journal article" date="2007" name="Mol. Biol. Rep.">
        <title>Cloning and characterization of the human gene RAP2C, a novel member of Ras family, which activates transcriptional activities of SRE.</title>
        <authorList>
            <person name="Guo Z."/>
            <person name="Yuan J."/>
            <person name="Tang W."/>
            <person name="Chen X."/>
            <person name="Gu X."/>
            <person name="Luo K."/>
            <person name="Wang Y."/>
            <person name="Wan B."/>
            <person name="Yu L."/>
        </authorList>
    </citation>
    <scope>NUCLEOTIDE SEQUENCE [MRNA]</scope>
    <scope>FUNCTION</scope>
    <scope>SUBCELLULAR LOCATION</scope>
    <scope>TISSUE SPECIFICITY</scope>
    <source>
        <tissue>Testis</tissue>
    </source>
</reference>
<reference key="2">
    <citation type="submission" date="1999-10" db="EMBL/GenBank/DDBJ databases">
        <authorList>
            <person name="Rhodes S."/>
            <person name="Huckle E."/>
        </authorList>
    </citation>
    <scope>NUCLEOTIDE SEQUENCE [LARGE SCALE MRNA]</scope>
</reference>
<reference key="3">
    <citation type="journal article" date="2004" name="Nat. Genet.">
        <title>Complete sequencing and characterization of 21,243 full-length human cDNAs.</title>
        <authorList>
            <person name="Ota T."/>
            <person name="Suzuki Y."/>
            <person name="Nishikawa T."/>
            <person name="Otsuki T."/>
            <person name="Sugiyama T."/>
            <person name="Irie R."/>
            <person name="Wakamatsu A."/>
            <person name="Hayashi K."/>
            <person name="Sato H."/>
            <person name="Nagai K."/>
            <person name="Kimura K."/>
            <person name="Makita H."/>
            <person name="Sekine M."/>
            <person name="Obayashi M."/>
            <person name="Nishi T."/>
            <person name="Shibahara T."/>
            <person name="Tanaka T."/>
            <person name="Ishii S."/>
            <person name="Yamamoto J."/>
            <person name="Saito K."/>
            <person name="Kawai Y."/>
            <person name="Isono Y."/>
            <person name="Nakamura Y."/>
            <person name="Nagahari K."/>
            <person name="Murakami K."/>
            <person name="Yasuda T."/>
            <person name="Iwayanagi T."/>
            <person name="Wagatsuma M."/>
            <person name="Shiratori A."/>
            <person name="Sudo H."/>
            <person name="Hosoiri T."/>
            <person name="Kaku Y."/>
            <person name="Kodaira H."/>
            <person name="Kondo H."/>
            <person name="Sugawara M."/>
            <person name="Takahashi M."/>
            <person name="Kanda K."/>
            <person name="Yokoi T."/>
            <person name="Furuya T."/>
            <person name="Kikkawa E."/>
            <person name="Omura Y."/>
            <person name="Abe K."/>
            <person name="Kamihara K."/>
            <person name="Katsuta N."/>
            <person name="Sato K."/>
            <person name="Tanikawa M."/>
            <person name="Yamazaki M."/>
            <person name="Ninomiya K."/>
            <person name="Ishibashi T."/>
            <person name="Yamashita H."/>
            <person name="Murakawa K."/>
            <person name="Fujimori K."/>
            <person name="Tanai H."/>
            <person name="Kimata M."/>
            <person name="Watanabe M."/>
            <person name="Hiraoka S."/>
            <person name="Chiba Y."/>
            <person name="Ishida S."/>
            <person name="Ono Y."/>
            <person name="Takiguchi S."/>
            <person name="Watanabe S."/>
            <person name="Yosida M."/>
            <person name="Hotuta T."/>
            <person name="Kusano J."/>
            <person name="Kanehori K."/>
            <person name="Takahashi-Fujii A."/>
            <person name="Hara H."/>
            <person name="Tanase T.-O."/>
            <person name="Nomura Y."/>
            <person name="Togiya S."/>
            <person name="Komai F."/>
            <person name="Hara R."/>
            <person name="Takeuchi K."/>
            <person name="Arita M."/>
            <person name="Imose N."/>
            <person name="Musashino K."/>
            <person name="Yuuki H."/>
            <person name="Oshima A."/>
            <person name="Sasaki N."/>
            <person name="Aotsuka S."/>
            <person name="Yoshikawa Y."/>
            <person name="Matsunawa H."/>
            <person name="Ichihara T."/>
            <person name="Shiohata N."/>
            <person name="Sano S."/>
            <person name="Moriya S."/>
            <person name="Momiyama H."/>
            <person name="Satoh N."/>
            <person name="Takami S."/>
            <person name="Terashima Y."/>
            <person name="Suzuki O."/>
            <person name="Nakagawa S."/>
            <person name="Senoh A."/>
            <person name="Mizoguchi H."/>
            <person name="Goto Y."/>
            <person name="Shimizu F."/>
            <person name="Wakebe H."/>
            <person name="Hishigaki H."/>
            <person name="Watanabe T."/>
            <person name="Sugiyama A."/>
            <person name="Takemoto M."/>
            <person name="Kawakami B."/>
            <person name="Yamazaki M."/>
            <person name="Watanabe K."/>
            <person name="Kumagai A."/>
            <person name="Itakura S."/>
            <person name="Fukuzumi Y."/>
            <person name="Fujimori Y."/>
            <person name="Komiyama M."/>
            <person name="Tashiro H."/>
            <person name="Tanigami A."/>
            <person name="Fujiwara T."/>
            <person name="Ono T."/>
            <person name="Yamada K."/>
            <person name="Fujii Y."/>
            <person name="Ozaki K."/>
            <person name="Hirao M."/>
            <person name="Ohmori Y."/>
            <person name="Kawabata A."/>
            <person name="Hikiji T."/>
            <person name="Kobatake N."/>
            <person name="Inagaki H."/>
            <person name="Ikema Y."/>
            <person name="Okamoto S."/>
            <person name="Okitani R."/>
            <person name="Kawakami T."/>
            <person name="Noguchi S."/>
            <person name="Itoh T."/>
            <person name="Shigeta K."/>
            <person name="Senba T."/>
            <person name="Matsumura K."/>
            <person name="Nakajima Y."/>
            <person name="Mizuno T."/>
            <person name="Morinaga M."/>
            <person name="Sasaki M."/>
            <person name="Togashi T."/>
            <person name="Oyama M."/>
            <person name="Hata H."/>
            <person name="Watanabe M."/>
            <person name="Komatsu T."/>
            <person name="Mizushima-Sugano J."/>
            <person name="Satoh T."/>
            <person name="Shirai Y."/>
            <person name="Takahashi Y."/>
            <person name="Nakagawa K."/>
            <person name="Okumura K."/>
            <person name="Nagase T."/>
            <person name="Nomura N."/>
            <person name="Kikuchi H."/>
            <person name="Masuho Y."/>
            <person name="Yamashita R."/>
            <person name="Nakai K."/>
            <person name="Yada T."/>
            <person name="Nakamura Y."/>
            <person name="Ohara O."/>
            <person name="Isogai T."/>
            <person name="Sugano S."/>
        </authorList>
    </citation>
    <scope>NUCLEOTIDE SEQUENCE [LARGE SCALE MRNA]</scope>
    <source>
        <tissue>Caudate nucleus</tissue>
    </source>
</reference>
<reference key="4">
    <citation type="journal article" date="2005" name="Nature">
        <title>The DNA sequence of the human X chromosome.</title>
        <authorList>
            <person name="Ross M.T."/>
            <person name="Grafham D.V."/>
            <person name="Coffey A.J."/>
            <person name="Scherer S."/>
            <person name="McLay K."/>
            <person name="Muzny D."/>
            <person name="Platzer M."/>
            <person name="Howell G.R."/>
            <person name="Burrows C."/>
            <person name="Bird C.P."/>
            <person name="Frankish A."/>
            <person name="Lovell F.L."/>
            <person name="Howe K.L."/>
            <person name="Ashurst J.L."/>
            <person name="Fulton R.S."/>
            <person name="Sudbrak R."/>
            <person name="Wen G."/>
            <person name="Jones M.C."/>
            <person name="Hurles M.E."/>
            <person name="Andrews T.D."/>
            <person name="Scott C.E."/>
            <person name="Searle S."/>
            <person name="Ramser J."/>
            <person name="Whittaker A."/>
            <person name="Deadman R."/>
            <person name="Carter N.P."/>
            <person name="Hunt S.E."/>
            <person name="Chen R."/>
            <person name="Cree A."/>
            <person name="Gunaratne P."/>
            <person name="Havlak P."/>
            <person name="Hodgson A."/>
            <person name="Metzker M.L."/>
            <person name="Richards S."/>
            <person name="Scott G."/>
            <person name="Steffen D."/>
            <person name="Sodergren E."/>
            <person name="Wheeler D.A."/>
            <person name="Worley K.C."/>
            <person name="Ainscough R."/>
            <person name="Ambrose K.D."/>
            <person name="Ansari-Lari M.A."/>
            <person name="Aradhya S."/>
            <person name="Ashwell R.I."/>
            <person name="Babbage A.K."/>
            <person name="Bagguley C.L."/>
            <person name="Ballabio A."/>
            <person name="Banerjee R."/>
            <person name="Barker G.E."/>
            <person name="Barlow K.F."/>
            <person name="Barrett I.P."/>
            <person name="Bates K.N."/>
            <person name="Beare D.M."/>
            <person name="Beasley H."/>
            <person name="Beasley O."/>
            <person name="Beck A."/>
            <person name="Bethel G."/>
            <person name="Blechschmidt K."/>
            <person name="Brady N."/>
            <person name="Bray-Allen S."/>
            <person name="Bridgeman A.M."/>
            <person name="Brown A.J."/>
            <person name="Brown M.J."/>
            <person name="Bonnin D."/>
            <person name="Bruford E.A."/>
            <person name="Buhay C."/>
            <person name="Burch P."/>
            <person name="Burford D."/>
            <person name="Burgess J."/>
            <person name="Burrill W."/>
            <person name="Burton J."/>
            <person name="Bye J.M."/>
            <person name="Carder C."/>
            <person name="Carrel L."/>
            <person name="Chako J."/>
            <person name="Chapman J.C."/>
            <person name="Chavez D."/>
            <person name="Chen E."/>
            <person name="Chen G."/>
            <person name="Chen Y."/>
            <person name="Chen Z."/>
            <person name="Chinault C."/>
            <person name="Ciccodicola A."/>
            <person name="Clark S.Y."/>
            <person name="Clarke G."/>
            <person name="Clee C.M."/>
            <person name="Clegg S."/>
            <person name="Clerc-Blankenburg K."/>
            <person name="Clifford K."/>
            <person name="Cobley V."/>
            <person name="Cole C.G."/>
            <person name="Conquer J.S."/>
            <person name="Corby N."/>
            <person name="Connor R.E."/>
            <person name="David R."/>
            <person name="Davies J."/>
            <person name="Davis C."/>
            <person name="Davis J."/>
            <person name="Delgado O."/>
            <person name="Deshazo D."/>
            <person name="Dhami P."/>
            <person name="Ding Y."/>
            <person name="Dinh H."/>
            <person name="Dodsworth S."/>
            <person name="Draper H."/>
            <person name="Dugan-Rocha S."/>
            <person name="Dunham A."/>
            <person name="Dunn M."/>
            <person name="Durbin K.J."/>
            <person name="Dutta I."/>
            <person name="Eades T."/>
            <person name="Ellwood M."/>
            <person name="Emery-Cohen A."/>
            <person name="Errington H."/>
            <person name="Evans K.L."/>
            <person name="Faulkner L."/>
            <person name="Francis F."/>
            <person name="Frankland J."/>
            <person name="Fraser A.E."/>
            <person name="Galgoczy P."/>
            <person name="Gilbert J."/>
            <person name="Gill R."/>
            <person name="Gloeckner G."/>
            <person name="Gregory S.G."/>
            <person name="Gribble S."/>
            <person name="Griffiths C."/>
            <person name="Grocock R."/>
            <person name="Gu Y."/>
            <person name="Gwilliam R."/>
            <person name="Hamilton C."/>
            <person name="Hart E.A."/>
            <person name="Hawes A."/>
            <person name="Heath P.D."/>
            <person name="Heitmann K."/>
            <person name="Hennig S."/>
            <person name="Hernandez J."/>
            <person name="Hinzmann B."/>
            <person name="Ho S."/>
            <person name="Hoffs M."/>
            <person name="Howden P.J."/>
            <person name="Huckle E.J."/>
            <person name="Hume J."/>
            <person name="Hunt P.J."/>
            <person name="Hunt A.R."/>
            <person name="Isherwood J."/>
            <person name="Jacob L."/>
            <person name="Johnson D."/>
            <person name="Jones S."/>
            <person name="de Jong P.J."/>
            <person name="Joseph S.S."/>
            <person name="Keenan S."/>
            <person name="Kelly S."/>
            <person name="Kershaw J.K."/>
            <person name="Khan Z."/>
            <person name="Kioschis P."/>
            <person name="Klages S."/>
            <person name="Knights A.J."/>
            <person name="Kosiura A."/>
            <person name="Kovar-Smith C."/>
            <person name="Laird G.K."/>
            <person name="Langford C."/>
            <person name="Lawlor S."/>
            <person name="Leversha M."/>
            <person name="Lewis L."/>
            <person name="Liu W."/>
            <person name="Lloyd C."/>
            <person name="Lloyd D.M."/>
            <person name="Loulseged H."/>
            <person name="Loveland J.E."/>
            <person name="Lovell J.D."/>
            <person name="Lozado R."/>
            <person name="Lu J."/>
            <person name="Lyne R."/>
            <person name="Ma J."/>
            <person name="Maheshwari M."/>
            <person name="Matthews L.H."/>
            <person name="McDowall J."/>
            <person name="McLaren S."/>
            <person name="McMurray A."/>
            <person name="Meidl P."/>
            <person name="Meitinger T."/>
            <person name="Milne S."/>
            <person name="Miner G."/>
            <person name="Mistry S.L."/>
            <person name="Morgan M."/>
            <person name="Morris S."/>
            <person name="Mueller I."/>
            <person name="Mullikin J.C."/>
            <person name="Nguyen N."/>
            <person name="Nordsiek G."/>
            <person name="Nyakatura G."/>
            <person name="O'dell C.N."/>
            <person name="Okwuonu G."/>
            <person name="Palmer S."/>
            <person name="Pandian R."/>
            <person name="Parker D."/>
            <person name="Parrish J."/>
            <person name="Pasternak S."/>
            <person name="Patel D."/>
            <person name="Pearce A.V."/>
            <person name="Pearson D.M."/>
            <person name="Pelan S.E."/>
            <person name="Perez L."/>
            <person name="Porter K.M."/>
            <person name="Ramsey Y."/>
            <person name="Reichwald K."/>
            <person name="Rhodes S."/>
            <person name="Ridler K.A."/>
            <person name="Schlessinger D."/>
            <person name="Schueler M.G."/>
            <person name="Sehra H.K."/>
            <person name="Shaw-Smith C."/>
            <person name="Shen H."/>
            <person name="Sheridan E.M."/>
            <person name="Shownkeen R."/>
            <person name="Skuce C.D."/>
            <person name="Smith M.L."/>
            <person name="Sotheran E.C."/>
            <person name="Steingruber H.E."/>
            <person name="Steward C.A."/>
            <person name="Storey R."/>
            <person name="Swann R.M."/>
            <person name="Swarbreck D."/>
            <person name="Tabor P.E."/>
            <person name="Taudien S."/>
            <person name="Taylor T."/>
            <person name="Teague B."/>
            <person name="Thomas K."/>
            <person name="Thorpe A."/>
            <person name="Timms K."/>
            <person name="Tracey A."/>
            <person name="Trevanion S."/>
            <person name="Tromans A.C."/>
            <person name="d'Urso M."/>
            <person name="Verduzco D."/>
            <person name="Villasana D."/>
            <person name="Waldron L."/>
            <person name="Wall M."/>
            <person name="Wang Q."/>
            <person name="Warren J."/>
            <person name="Warry G.L."/>
            <person name="Wei X."/>
            <person name="West A."/>
            <person name="Whitehead S.L."/>
            <person name="Whiteley M.N."/>
            <person name="Wilkinson J.E."/>
            <person name="Willey D.L."/>
            <person name="Williams G."/>
            <person name="Williams L."/>
            <person name="Williamson A."/>
            <person name="Williamson H."/>
            <person name="Wilming L."/>
            <person name="Woodmansey R.L."/>
            <person name="Wray P.W."/>
            <person name="Yen J."/>
            <person name="Zhang J."/>
            <person name="Zhou J."/>
            <person name="Zoghbi H."/>
            <person name="Zorilla S."/>
            <person name="Buck D."/>
            <person name="Reinhardt R."/>
            <person name="Poustka A."/>
            <person name="Rosenthal A."/>
            <person name="Lehrach H."/>
            <person name="Meindl A."/>
            <person name="Minx P.J."/>
            <person name="Hillier L.W."/>
            <person name="Willard H.F."/>
            <person name="Wilson R.K."/>
            <person name="Waterston R.H."/>
            <person name="Rice C.M."/>
            <person name="Vaudin M."/>
            <person name="Coulson A."/>
            <person name="Nelson D.L."/>
            <person name="Weinstock G."/>
            <person name="Sulston J.E."/>
            <person name="Durbin R.M."/>
            <person name="Hubbard T."/>
            <person name="Gibbs R.A."/>
            <person name="Beck S."/>
            <person name="Rogers J."/>
            <person name="Bentley D.R."/>
        </authorList>
    </citation>
    <scope>NUCLEOTIDE SEQUENCE [LARGE SCALE GENOMIC DNA]</scope>
</reference>
<reference key="5">
    <citation type="submission" date="2005-09" db="EMBL/GenBank/DDBJ databases">
        <authorList>
            <person name="Mural R.J."/>
            <person name="Istrail S."/>
            <person name="Sutton G.G."/>
            <person name="Florea L."/>
            <person name="Halpern A.L."/>
            <person name="Mobarry C.M."/>
            <person name="Lippert R."/>
            <person name="Walenz B."/>
            <person name="Shatkay H."/>
            <person name="Dew I."/>
            <person name="Miller J.R."/>
            <person name="Flanigan M.J."/>
            <person name="Edwards N.J."/>
            <person name="Bolanos R."/>
            <person name="Fasulo D."/>
            <person name="Halldorsson B.V."/>
            <person name="Hannenhalli S."/>
            <person name="Turner R."/>
            <person name="Yooseph S."/>
            <person name="Lu F."/>
            <person name="Nusskern D.R."/>
            <person name="Shue B.C."/>
            <person name="Zheng X.H."/>
            <person name="Zhong F."/>
            <person name="Delcher A.L."/>
            <person name="Huson D.H."/>
            <person name="Kravitz S.A."/>
            <person name="Mouchard L."/>
            <person name="Reinert K."/>
            <person name="Remington K.A."/>
            <person name="Clark A.G."/>
            <person name="Waterman M.S."/>
            <person name="Eichler E.E."/>
            <person name="Adams M.D."/>
            <person name="Hunkapiller M.W."/>
            <person name="Myers E.W."/>
            <person name="Venter J.C."/>
        </authorList>
    </citation>
    <scope>NUCLEOTIDE SEQUENCE [LARGE SCALE GENOMIC DNA]</scope>
</reference>
<reference key="6">
    <citation type="journal article" date="2004" name="Genome Res.">
        <title>The status, quality, and expansion of the NIH full-length cDNA project: the Mammalian Gene Collection (MGC).</title>
        <authorList>
            <consortium name="The MGC Project Team"/>
        </authorList>
    </citation>
    <scope>NUCLEOTIDE SEQUENCE [LARGE SCALE MRNA]</scope>
    <source>
        <tissue>Placenta</tissue>
    </source>
</reference>
<reference key="7">
    <citation type="journal article" date="2006" name="Biochimie">
        <title>Identification and biochemical characterization of Rap2C, a new member of the Rap family of small GTP-binding proteins.</title>
        <authorList>
            <person name="Paganini S."/>
            <person name="Guidetti G.F."/>
            <person name="Catricala S."/>
            <person name="Trionfini P."/>
            <person name="Panelli S."/>
            <person name="Balduini C."/>
            <person name="Torti M."/>
        </authorList>
    </citation>
    <scope>GTP-BINDING</scope>
    <scope>TISSUE SPECIFICITY</scope>
</reference>
<reference key="8">
    <citation type="journal article" date="2011" name="BMC Syst. Biol.">
        <title>Initial characterization of the human central proteome.</title>
        <authorList>
            <person name="Burkard T.R."/>
            <person name="Planyavsky M."/>
            <person name="Kaupe I."/>
            <person name="Breitwieser F.P."/>
            <person name="Buerckstuemmer T."/>
            <person name="Bennett K.L."/>
            <person name="Superti-Furga G."/>
            <person name="Colinge J."/>
        </authorList>
    </citation>
    <scope>IDENTIFICATION BY MASS SPECTROMETRY [LARGE SCALE ANALYSIS]</scope>
</reference>
<reference key="9">
    <citation type="journal article" date="2015" name="Proteomics">
        <title>N-terminome analysis of the human mitochondrial proteome.</title>
        <authorList>
            <person name="Vaca Jacome A.S."/>
            <person name="Rabilloud T."/>
            <person name="Schaeffer-Reiss C."/>
            <person name="Rompais M."/>
            <person name="Ayoub D."/>
            <person name="Lane L."/>
            <person name="Bairoch A."/>
            <person name="Van Dorsselaer A."/>
            <person name="Carapito C."/>
        </authorList>
    </citation>
    <scope>IDENTIFICATION BY MASS SPECTROMETRY [LARGE SCALE ANALYSIS]</scope>
</reference>
<proteinExistence type="evidence at protein level"/>
<feature type="chain" id="PRO_0000030221" description="Ras-related protein Rap-2c">
    <location>
        <begin position="1"/>
        <end position="180"/>
    </location>
</feature>
<feature type="propeptide" id="PRO_0000030222" description="Removed in mature form" evidence="3">
    <location>
        <begin position="181"/>
        <end position="183"/>
    </location>
</feature>
<feature type="short sequence motif" description="Effector region" evidence="6">
    <location>
        <begin position="32"/>
        <end position="40"/>
    </location>
</feature>
<feature type="binding site" evidence="1">
    <location>
        <begin position="10"/>
        <end position="17"/>
    </location>
    <ligand>
        <name>GTP</name>
        <dbReference type="ChEBI" id="CHEBI:37565"/>
    </ligand>
</feature>
<feature type="binding site" evidence="1">
    <location>
        <begin position="57"/>
        <end position="61"/>
    </location>
    <ligand>
        <name>GTP</name>
        <dbReference type="ChEBI" id="CHEBI:37565"/>
    </ligand>
</feature>
<feature type="binding site" evidence="1">
    <location>
        <begin position="116"/>
        <end position="119"/>
    </location>
    <ligand>
        <name>GTP</name>
        <dbReference type="ChEBI" id="CHEBI:37565"/>
    </ligand>
</feature>
<feature type="modified residue" description="Cysteine methyl ester" evidence="3">
    <location>
        <position position="180"/>
    </location>
</feature>
<feature type="lipid moiety-binding region" description="S-palmitoyl cysteine" evidence="3">
    <location>
        <position position="176"/>
    </location>
</feature>
<feature type="lipid moiety-binding region" description="S-palmitoyl cysteine" evidence="3">
    <location>
        <position position="177"/>
    </location>
</feature>
<feature type="lipid moiety-binding region" description="S-geranylgeranyl cysteine" evidence="3">
    <location>
        <position position="180"/>
    </location>
</feature>
<feature type="sequence conflict" description="In Ref. 6; AAH03403." evidence="6" ref="6">
    <original>A</original>
    <variation>V</variation>
    <location>
        <position position="135"/>
    </location>
</feature>
<organism>
    <name type="scientific">Homo sapiens</name>
    <name type="common">Human</name>
    <dbReference type="NCBI Taxonomy" id="9606"/>
    <lineage>
        <taxon>Eukaryota</taxon>
        <taxon>Metazoa</taxon>
        <taxon>Chordata</taxon>
        <taxon>Craniata</taxon>
        <taxon>Vertebrata</taxon>
        <taxon>Euteleostomi</taxon>
        <taxon>Mammalia</taxon>
        <taxon>Eutheria</taxon>
        <taxon>Euarchontoglires</taxon>
        <taxon>Primates</taxon>
        <taxon>Haplorrhini</taxon>
        <taxon>Catarrhini</taxon>
        <taxon>Hominidae</taxon>
        <taxon>Homo</taxon>
    </lineage>
</organism>
<protein>
    <recommendedName>
        <fullName>Ras-related protein Rap-2c</fullName>
        <ecNumber evidence="2">3.6.5.2</ecNumber>
    </recommendedName>
</protein>
<dbReference type="EC" id="3.6.5.2" evidence="2"/>
<dbReference type="EMBL" id="AY298955">
    <property type="protein sequence ID" value="AAP55684.1"/>
    <property type="molecule type" value="mRNA"/>
</dbReference>
<dbReference type="EMBL" id="AL049685">
    <property type="protein sequence ID" value="CAB41256.1"/>
    <property type="molecule type" value="mRNA"/>
</dbReference>
<dbReference type="EMBL" id="AK124801">
    <property type="protein sequence ID" value="BAG54098.1"/>
    <property type="molecule type" value="mRNA"/>
</dbReference>
<dbReference type="EMBL" id="Z78022">
    <property type="status" value="NOT_ANNOTATED_CDS"/>
    <property type="molecule type" value="Genomic_DNA"/>
</dbReference>
<dbReference type="EMBL" id="CH471107">
    <property type="protein sequence ID" value="EAX11782.1"/>
    <property type="molecule type" value="Genomic_DNA"/>
</dbReference>
<dbReference type="EMBL" id="BC003403">
    <property type="protein sequence ID" value="AAH03403.1"/>
    <property type="molecule type" value="mRNA"/>
</dbReference>
<dbReference type="CCDS" id="CCDS14632.1"/>
<dbReference type="RefSeq" id="NP_001258115.1">
    <property type="nucleotide sequence ID" value="NM_001271186.2"/>
</dbReference>
<dbReference type="RefSeq" id="NP_001258116.1">
    <property type="nucleotide sequence ID" value="NM_001271187.1"/>
</dbReference>
<dbReference type="RefSeq" id="NP_067006.3">
    <property type="nucleotide sequence ID" value="NM_021183.4"/>
</dbReference>
<dbReference type="RefSeq" id="XP_011529678.1">
    <property type="nucleotide sequence ID" value="XM_011531376.2"/>
</dbReference>
<dbReference type="RefSeq" id="XP_047298245.1">
    <property type="nucleotide sequence ID" value="XM_047442289.1"/>
</dbReference>
<dbReference type="RefSeq" id="XP_047298246.1">
    <property type="nucleotide sequence ID" value="XM_047442290.1"/>
</dbReference>
<dbReference type="RefSeq" id="XP_054183440.1">
    <property type="nucleotide sequence ID" value="XM_054327465.1"/>
</dbReference>
<dbReference type="RefSeq" id="XP_054183441.1">
    <property type="nucleotide sequence ID" value="XM_054327466.1"/>
</dbReference>
<dbReference type="RefSeq" id="XP_054183442.1">
    <property type="nucleotide sequence ID" value="XM_054327467.1"/>
</dbReference>
<dbReference type="SMR" id="Q9Y3L5"/>
<dbReference type="BioGRID" id="121785">
    <property type="interactions" value="54"/>
</dbReference>
<dbReference type="FunCoup" id="Q9Y3L5">
    <property type="interactions" value="1190"/>
</dbReference>
<dbReference type="IntAct" id="Q9Y3L5">
    <property type="interactions" value="34"/>
</dbReference>
<dbReference type="MINT" id="Q9Y3L5"/>
<dbReference type="STRING" id="9606.ENSP00000359911"/>
<dbReference type="iPTMnet" id="Q9Y3L5"/>
<dbReference type="MetOSite" id="Q9Y3L5"/>
<dbReference type="PhosphoSitePlus" id="Q9Y3L5"/>
<dbReference type="SwissPalm" id="Q9Y3L5"/>
<dbReference type="BioMuta" id="RAP2C"/>
<dbReference type="DMDM" id="47117343"/>
<dbReference type="jPOST" id="Q9Y3L5"/>
<dbReference type="MassIVE" id="Q9Y3L5"/>
<dbReference type="PaxDb" id="9606-ENSP00000340274"/>
<dbReference type="PeptideAtlas" id="Q9Y3L5"/>
<dbReference type="ProteomicsDB" id="86043"/>
<dbReference type="Pumba" id="Q9Y3L5"/>
<dbReference type="Antibodypedia" id="56035">
    <property type="antibodies" value="116 antibodies from 24 providers"/>
</dbReference>
<dbReference type="DNASU" id="57826"/>
<dbReference type="Ensembl" id="ENST00000342983.6">
    <property type="protein sequence ID" value="ENSP00000340274.2"/>
    <property type="gene ID" value="ENSG00000123728.10"/>
</dbReference>
<dbReference type="Ensembl" id="ENST00000370874.2">
    <property type="protein sequence ID" value="ENSP00000359911.1"/>
    <property type="gene ID" value="ENSG00000123728.10"/>
</dbReference>
<dbReference type="GeneID" id="57826"/>
<dbReference type="KEGG" id="hsa:57826"/>
<dbReference type="MANE-Select" id="ENST00000370874.2">
    <property type="protein sequence ID" value="ENSP00000359911.1"/>
    <property type="RefSeq nucleotide sequence ID" value="NM_001271186.2"/>
    <property type="RefSeq protein sequence ID" value="NP_001258115.1"/>
</dbReference>
<dbReference type="UCSC" id="uc004ewp.5">
    <property type="organism name" value="human"/>
</dbReference>
<dbReference type="AGR" id="HGNC:21165"/>
<dbReference type="CTD" id="57826"/>
<dbReference type="DisGeNET" id="57826"/>
<dbReference type="GeneCards" id="RAP2C"/>
<dbReference type="HGNC" id="HGNC:21165">
    <property type="gene designation" value="RAP2C"/>
</dbReference>
<dbReference type="HPA" id="ENSG00000123728">
    <property type="expression patterns" value="Tissue enhanced (endometrium)"/>
</dbReference>
<dbReference type="neXtProt" id="NX_Q9Y3L5"/>
<dbReference type="OpenTargets" id="ENSG00000123728"/>
<dbReference type="PharmGKB" id="PA134899238"/>
<dbReference type="VEuPathDB" id="HostDB:ENSG00000123728"/>
<dbReference type="eggNOG" id="KOG0395">
    <property type="taxonomic scope" value="Eukaryota"/>
</dbReference>
<dbReference type="GeneTree" id="ENSGT00940000157245"/>
<dbReference type="HOGENOM" id="CLU_041217_9_8_1"/>
<dbReference type="InParanoid" id="Q9Y3L5"/>
<dbReference type="OMA" id="FLEDYEP"/>
<dbReference type="OrthoDB" id="5976022at2759"/>
<dbReference type="PAN-GO" id="Q9Y3L5">
    <property type="GO annotations" value="6 GO annotations based on evolutionary models"/>
</dbReference>
<dbReference type="PhylomeDB" id="Q9Y3L5"/>
<dbReference type="TreeFam" id="TF313014"/>
<dbReference type="PathwayCommons" id="Q9Y3L5"/>
<dbReference type="Reactome" id="R-HSA-6798695">
    <property type="pathway name" value="Neutrophil degranulation"/>
</dbReference>
<dbReference type="SignaLink" id="Q9Y3L5"/>
<dbReference type="BioGRID-ORCS" id="57826">
    <property type="hits" value="17 hits in 784 CRISPR screens"/>
</dbReference>
<dbReference type="CD-CODE" id="FB4E32DD">
    <property type="entry name" value="Presynaptic clusters and postsynaptic densities"/>
</dbReference>
<dbReference type="ChiTaRS" id="RAP2C">
    <property type="organism name" value="human"/>
</dbReference>
<dbReference type="GenomeRNAi" id="57826"/>
<dbReference type="Pharos" id="Q9Y3L5">
    <property type="development level" value="Tbio"/>
</dbReference>
<dbReference type="PRO" id="PR:Q9Y3L5"/>
<dbReference type="Proteomes" id="UP000005640">
    <property type="component" value="Chromosome X"/>
</dbReference>
<dbReference type="RNAct" id="Q9Y3L5">
    <property type="molecule type" value="protein"/>
</dbReference>
<dbReference type="Bgee" id="ENSG00000123728">
    <property type="expression patterns" value="Expressed in endothelial cell and 209 other cell types or tissues"/>
</dbReference>
<dbReference type="ExpressionAtlas" id="Q9Y3L5">
    <property type="expression patterns" value="baseline and differential"/>
</dbReference>
<dbReference type="GO" id="GO:0005923">
    <property type="term" value="C:bicellular tight junction"/>
    <property type="evidence" value="ECO:0000314"/>
    <property type="project" value="UniProtKB"/>
</dbReference>
<dbReference type="GO" id="GO:0044291">
    <property type="term" value="C:cell-cell contact zone"/>
    <property type="evidence" value="ECO:0000314"/>
    <property type="project" value="UniProtKB"/>
</dbReference>
<dbReference type="GO" id="GO:0005737">
    <property type="term" value="C:cytoplasm"/>
    <property type="evidence" value="ECO:0000314"/>
    <property type="project" value="UniProtKB"/>
</dbReference>
<dbReference type="GO" id="GO:0005829">
    <property type="term" value="C:cytosol"/>
    <property type="evidence" value="ECO:0007669"/>
    <property type="project" value="Ensembl"/>
</dbReference>
<dbReference type="GO" id="GO:0070062">
    <property type="term" value="C:extracellular exosome"/>
    <property type="evidence" value="ECO:0007005"/>
    <property type="project" value="UniProtKB"/>
</dbReference>
<dbReference type="GO" id="GO:0005886">
    <property type="term" value="C:plasma membrane"/>
    <property type="evidence" value="ECO:0000314"/>
    <property type="project" value="UniProtKB"/>
</dbReference>
<dbReference type="GO" id="GO:0055038">
    <property type="term" value="C:recycling endosome membrane"/>
    <property type="evidence" value="ECO:0000250"/>
    <property type="project" value="UniProtKB"/>
</dbReference>
<dbReference type="GO" id="GO:0070821">
    <property type="term" value="C:tertiary granule membrane"/>
    <property type="evidence" value="ECO:0000304"/>
    <property type="project" value="Reactome"/>
</dbReference>
<dbReference type="GO" id="GO:0003925">
    <property type="term" value="F:G protein activity"/>
    <property type="evidence" value="ECO:0007669"/>
    <property type="project" value="UniProtKB-EC"/>
</dbReference>
<dbReference type="GO" id="GO:0019003">
    <property type="term" value="F:GDP binding"/>
    <property type="evidence" value="ECO:0000314"/>
    <property type="project" value="UniProtKB"/>
</dbReference>
<dbReference type="GO" id="GO:0005525">
    <property type="term" value="F:GTP binding"/>
    <property type="evidence" value="ECO:0000314"/>
    <property type="project" value="UniProtKB"/>
</dbReference>
<dbReference type="GO" id="GO:0003924">
    <property type="term" value="F:GTPase activity"/>
    <property type="evidence" value="ECO:0000318"/>
    <property type="project" value="GO_Central"/>
</dbReference>
<dbReference type="GO" id="GO:0003713">
    <property type="term" value="F:transcription coactivator activity"/>
    <property type="evidence" value="ECO:0000314"/>
    <property type="project" value="UniProtKB"/>
</dbReference>
<dbReference type="GO" id="GO:0090557">
    <property type="term" value="P:establishment of endothelial intestinal barrier"/>
    <property type="evidence" value="ECO:0000315"/>
    <property type="project" value="UniProtKB"/>
</dbReference>
<dbReference type="GO" id="GO:0030336">
    <property type="term" value="P:negative regulation of cell migration"/>
    <property type="evidence" value="ECO:0000250"/>
    <property type="project" value="UniProtKB"/>
</dbReference>
<dbReference type="GO" id="GO:0032486">
    <property type="term" value="P:Rap protein signal transduction"/>
    <property type="evidence" value="ECO:0000250"/>
    <property type="project" value="UniProtKB"/>
</dbReference>
<dbReference type="GO" id="GO:0061097">
    <property type="term" value="P:regulation of protein tyrosine kinase activity"/>
    <property type="evidence" value="ECO:0000250"/>
    <property type="project" value="UniProtKB"/>
</dbReference>
<dbReference type="CDD" id="cd04176">
    <property type="entry name" value="Rap2"/>
    <property type="match status" value="1"/>
</dbReference>
<dbReference type="FunFam" id="3.40.50.300:FF:000189">
    <property type="entry name" value="Member of ras oncogene family"/>
    <property type="match status" value="1"/>
</dbReference>
<dbReference type="Gene3D" id="3.40.50.300">
    <property type="entry name" value="P-loop containing nucleotide triphosphate hydrolases"/>
    <property type="match status" value="1"/>
</dbReference>
<dbReference type="InterPro" id="IPR027417">
    <property type="entry name" value="P-loop_NTPase"/>
</dbReference>
<dbReference type="InterPro" id="IPR041840">
    <property type="entry name" value="Rap2"/>
</dbReference>
<dbReference type="InterPro" id="IPR005225">
    <property type="entry name" value="Small_GTP-bd"/>
</dbReference>
<dbReference type="InterPro" id="IPR001806">
    <property type="entry name" value="Small_GTPase"/>
</dbReference>
<dbReference type="InterPro" id="IPR020849">
    <property type="entry name" value="Small_GTPase_Ras-type"/>
</dbReference>
<dbReference type="NCBIfam" id="TIGR00231">
    <property type="entry name" value="small_GTP"/>
    <property type="match status" value="1"/>
</dbReference>
<dbReference type="PANTHER" id="PTHR24070">
    <property type="entry name" value="RAS, DI-RAS, AND RHEB FAMILY MEMBERS OF SMALL GTPASE SUPERFAMILY"/>
    <property type="match status" value="1"/>
</dbReference>
<dbReference type="Pfam" id="PF00071">
    <property type="entry name" value="Ras"/>
    <property type="match status" value="1"/>
</dbReference>
<dbReference type="PRINTS" id="PR00449">
    <property type="entry name" value="RASTRNSFRMNG"/>
</dbReference>
<dbReference type="SMART" id="SM00175">
    <property type="entry name" value="RAB"/>
    <property type="match status" value="1"/>
</dbReference>
<dbReference type="SMART" id="SM00173">
    <property type="entry name" value="RAS"/>
    <property type="match status" value="1"/>
</dbReference>
<dbReference type="SMART" id="SM00174">
    <property type="entry name" value="RHO"/>
    <property type="match status" value="1"/>
</dbReference>
<dbReference type="SUPFAM" id="SSF52540">
    <property type="entry name" value="P-loop containing nucleoside triphosphate hydrolases"/>
    <property type="match status" value="1"/>
</dbReference>
<dbReference type="PROSITE" id="PS51421">
    <property type="entry name" value="RAS"/>
    <property type="match status" value="1"/>
</dbReference>
<comment type="function">
    <text evidence="5">Small GTP-binding protein which cycles between a GDP-bound inactive and a GTP-bound active form. May play a role in cytoskeletal rearrangements and regulate cell spreading through activation of the effector TNIK. May play a role in SRE-mediated gene transcription.</text>
</comment>
<comment type="catalytic activity">
    <reaction evidence="2">
        <text>GTP + H2O = GDP + phosphate + H(+)</text>
        <dbReference type="Rhea" id="RHEA:19669"/>
        <dbReference type="ChEBI" id="CHEBI:15377"/>
        <dbReference type="ChEBI" id="CHEBI:15378"/>
        <dbReference type="ChEBI" id="CHEBI:37565"/>
        <dbReference type="ChEBI" id="CHEBI:43474"/>
        <dbReference type="ChEBI" id="CHEBI:58189"/>
        <dbReference type="EC" id="3.6.5.2"/>
    </reaction>
</comment>
<comment type="interaction">
    <interactant intactId="EBI-2856617">
        <id>Q9Y3L5</id>
    </interactant>
    <interactant intactId="EBI-12832744">
        <id>P52306-5</id>
        <label>RAP1GDS1</label>
    </interactant>
    <organismsDiffer>false</organismsDiffer>
    <experiments>3</experiments>
</comment>
<comment type="subcellular location">
    <subcellularLocation>
        <location evidence="5">Cytoplasm</location>
    </subcellularLocation>
    <subcellularLocation>
        <location evidence="1">Recycling endosome membrane</location>
        <topology evidence="1">Lipid-anchor</topology>
        <orientation evidence="1">Cytoplasmic side</orientation>
    </subcellularLocation>
</comment>
<comment type="tissue specificity">
    <text evidence="4 5">Expressed in liver, skeletal muscle, prostate, uterus, rectum, stomach, and bladder and to a lower extent in brain, kidney, pancreas, and bone marrow. Expressed in mononuclear leukocytes and megakaryocytes.</text>
</comment>
<comment type="PTM">
    <text evidence="3">Palmitoylated. Palmitoylation is required for association with recycling endosome membranes and activation of TNIK.</text>
</comment>
<comment type="similarity">
    <text evidence="6">Belongs to the small GTPase superfamily. Ras family.</text>
</comment>
<evidence type="ECO:0000250" key="1"/>
<evidence type="ECO:0000250" key="2">
    <source>
        <dbReference type="UniProtKB" id="P10114"/>
    </source>
</evidence>
<evidence type="ECO:0000250" key="3">
    <source>
        <dbReference type="UniProtKB" id="Q8BU31"/>
    </source>
</evidence>
<evidence type="ECO:0000269" key="4">
    <source>
    </source>
</evidence>
<evidence type="ECO:0000269" key="5">
    <source>
    </source>
</evidence>
<evidence type="ECO:0000305" key="6"/>
<accession>Q9Y3L5</accession>
<accession>B3KWD6</accession>
<accession>Q5H9H9</accession>
<accession>Q9BTS0</accession>
<gene>
    <name type="primary">RAP2C</name>
</gene>
<name>RAP2C_HUMAN</name>
<sequence>MREYKVVVLGSGGVGKSALTVQFVTGTFIEKYDPTIEDFYRKEIEVDSSPSVLEILDTAGTEQFASMRDLYIKNGQGFILVYSLVNQQSFQDIKPMRDQIVRVKRYEKVPLILVGNKVDLEPEREVMSSEGRALAQEWGCPFMETSAKSKSMVDELFAEIVRQMNYSSLPEKQDQCCTTCVVQ</sequence>